<proteinExistence type="inferred from homology"/>
<protein>
    <recommendedName>
        <fullName evidence="1">Replication protein E1</fullName>
        <ecNumber evidence="1">5.6.2.4</ecNumber>
    </recommendedName>
    <alternativeName>
        <fullName evidence="1">ATP-dependent helicase E1</fullName>
    </alternativeName>
    <alternativeName>
        <fullName evidence="1">DNA 3'-5' helicase E1</fullName>
    </alternativeName>
</protein>
<evidence type="ECO:0000255" key="1">
    <source>
        <dbReference type="HAMAP-Rule" id="MF_04000"/>
    </source>
</evidence>
<evidence type="ECO:0000256" key="2">
    <source>
        <dbReference type="SAM" id="MobiDB-lite"/>
    </source>
</evidence>
<name>VE1_HPV14</name>
<comment type="function">
    <text evidence="1">ATP-dependent DNA 3'-5' helicase required for initiation of viral DNA replication. It forms a complex with the viral E2 protein. The E1-E2 complex binds to the replication origin which contains binding sites for both proteins. During the initial step, a dimer of E1 interacts with a dimer of protein E2 leading to a complex that binds the viral origin of replication with high specificity. Then, a second dimer of E1 displaces the E2 dimer in an ATP-dependent manner to form the E1 tetramer. Following this, two E1 monomers are added to each half of the site, which results in the formation of two E1 trimers on the viral ori. Subsequently, two hexamers will be created. The double hexamer acts as a bi-directional helicase machinery and unwinds the viral DNA and then recruits the host DNA polymerase to start replication.</text>
</comment>
<comment type="catalytic activity">
    <reaction evidence="1">
        <text>Couples ATP hydrolysis with the unwinding of duplex DNA by translocating in the 3'-5' direction.</text>
        <dbReference type="EC" id="5.6.2.4"/>
    </reaction>
</comment>
<comment type="catalytic activity">
    <reaction evidence="1">
        <text>ATP + H2O = ADP + phosphate + H(+)</text>
        <dbReference type="Rhea" id="RHEA:13065"/>
        <dbReference type="ChEBI" id="CHEBI:15377"/>
        <dbReference type="ChEBI" id="CHEBI:15378"/>
        <dbReference type="ChEBI" id="CHEBI:30616"/>
        <dbReference type="ChEBI" id="CHEBI:43474"/>
        <dbReference type="ChEBI" id="CHEBI:456216"/>
        <dbReference type="EC" id="5.6.2.4"/>
    </reaction>
</comment>
<comment type="subunit">
    <text evidence="1">Can form hexamers. Interacts with E2 protein; this interaction increases E1 DNA binding specificity. Interacts with host DNA polymerase subunit POLA2. Interacts with host single stranded DNA-binding protein RPA1. Interacts with host TOP1; this interaction stimulates the enzymatic activity of TOP1.</text>
</comment>
<comment type="subcellular location">
    <subcellularLocation>
        <location evidence="1">Host nucleus</location>
    </subcellularLocation>
</comment>
<comment type="PTM">
    <text evidence="1">Phosphorylated.</text>
</comment>
<comment type="PTM">
    <text evidence="1">Sumoylated.</text>
</comment>
<comment type="similarity">
    <text evidence="1">Belongs to the papillomaviridae E1 protein family.</text>
</comment>
<accession>P36721</accession>
<gene>
    <name evidence="1" type="primary">E1</name>
</gene>
<dbReference type="EC" id="5.6.2.4" evidence="1"/>
<dbReference type="EMBL" id="X74467">
    <property type="protein sequence ID" value="CAA52502.1"/>
    <property type="molecule type" value="Genomic_DNA"/>
</dbReference>
<dbReference type="PIR" id="S36469">
    <property type="entry name" value="S36469"/>
</dbReference>
<dbReference type="SMR" id="P36721"/>
<dbReference type="Proteomes" id="UP000009108">
    <property type="component" value="Segment"/>
</dbReference>
<dbReference type="GO" id="GO:0042025">
    <property type="term" value="C:host cell nucleus"/>
    <property type="evidence" value="ECO:0007669"/>
    <property type="project" value="UniProtKB-SubCell"/>
</dbReference>
<dbReference type="GO" id="GO:0005524">
    <property type="term" value="F:ATP binding"/>
    <property type="evidence" value="ECO:0007669"/>
    <property type="project" value="UniProtKB-UniRule"/>
</dbReference>
<dbReference type="GO" id="GO:0016887">
    <property type="term" value="F:ATP hydrolysis activity"/>
    <property type="evidence" value="ECO:0007669"/>
    <property type="project" value="RHEA"/>
</dbReference>
<dbReference type="GO" id="GO:0003677">
    <property type="term" value="F:DNA binding"/>
    <property type="evidence" value="ECO:0007669"/>
    <property type="project" value="UniProtKB-UniRule"/>
</dbReference>
<dbReference type="GO" id="GO:0003678">
    <property type="term" value="F:DNA helicase activity"/>
    <property type="evidence" value="ECO:0007669"/>
    <property type="project" value="UniProtKB-UniRule"/>
</dbReference>
<dbReference type="GO" id="GO:0006260">
    <property type="term" value="P:DNA replication"/>
    <property type="evidence" value="ECO:0007669"/>
    <property type="project" value="UniProtKB-UniRule"/>
</dbReference>
<dbReference type="Gene3D" id="3.40.1310.10">
    <property type="match status" value="1"/>
</dbReference>
<dbReference type="Gene3D" id="3.40.50.300">
    <property type="entry name" value="P-loop containing nucleotide triphosphate hydrolases"/>
    <property type="match status" value="1"/>
</dbReference>
<dbReference type="Gene3D" id="1.10.10.510">
    <property type="entry name" value="Zinc finger, large T-antigen D1 domain"/>
    <property type="match status" value="1"/>
</dbReference>
<dbReference type="HAMAP" id="MF_04000">
    <property type="entry name" value="PPV_E1"/>
    <property type="match status" value="1"/>
</dbReference>
<dbReference type="InterPro" id="IPR014015">
    <property type="entry name" value="Helicase_SF3_DNA-vir"/>
</dbReference>
<dbReference type="InterPro" id="IPR027417">
    <property type="entry name" value="P-loop_NTPase"/>
</dbReference>
<dbReference type="InterPro" id="IPR001177">
    <property type="entry name" value="PPV_DNA_helicase_E1_C"/>
</dbReference>
<dbReference type="InterPro" id="IPR014000">
    <property type="entry name" value="PPV_DNA_helicase_E1_N"/>
</dbReference>
<dbReference type="InterPro" id="IPR046832">
    <property type="entry name" value="PPV_E1_DBD"/>
</dbReference>
<dbReference type="InterPro" id="IPR046935">
    <property type="entry name" value="PPV_E1_DBD_sf"/>
</dbReference>
<dbReference type="InterPro" id="IPR016393">
    <property type="entry name" value="Rep_E1_papillomaV"/>
</dbReference>
<dbReference type="InterPro" id="IPR037102">
    <property type="entry name" value="Znf_lg_T-Ag_D1_dom_sf"/>
</dbReference>
<dbReference type="Pfam" id="PF00519">
    <property type="entry name" value="PPV_E1_C"/>
    <property type="match status" value="1"/>
</dbReference>
<dbReference type="Pfam" id="PF20450">
    <property type="entry name" value="PPV_E1_DBD"/>
    <property type="match status" value="1"/>
</dbReference>
<dbReference type="Pfam" id="PF00524">
    <property type="entry name" value="PPV_E1_N"/>
    <property type="match status" value="1"/>
</dbReference>
<dbReference type="PIRSF" id="PIRSF003383">
    <property type="entry name" value="Rep_E1_papillomaV"/>
    <property type="match status" value="1"/>
</dbReference>
<dbReference type="SUPFAM" id="SSF55464">
    <property type="entry name" value="Origin of replication-binding domain, RBD-like"/>
    <property type="match status" value="1"/>
</dbReference>
<dbReference type="SUPFAM" id="SSF52540">
    <property type="entry name" value="P-loop containing nucleoside triphosphate hydrolases"/>
    <property type="match status" value="1"/>
</dbReference>
<dbReference type="PROSITE" id="PS51206">
    <property type="entry name" value="SF3_HELICASE_1"/>
    <property type="match status" value="1"/>
</dbReference>
<feature type="chain" id="PRO_0000133112" description="Replication protein E1">
    <location>
        <begin position="1"/>
        <end position="605"/>
    </location>
</feature>
<feature type="domain" description="SF3 helicase" evidence="1">
    <location>
        <begin position="407"/>
        <end position="557"/>
    </location>
</feature>
<feature type="region of interest" description="DNA-binding region" evidence="1">
    <location>
        <begin position="145"/>
        <end position="308"/>
    </location>
</feature>
<feature type="region of interest" description="Disordered" evidence="2">
    <location>
        <begin position="580"/>
        <end position="605"/>
    </location>
</feature>
<feature type="short sequence motif" description="Nuclear localization signal" evidence="1">
    <location>
        <begin position="77"/>
        <end position="79"/>
    </location>
</feature>
<feature type="short sequence motif" description="Nuclear export signal" evidence="1">
    <location>
        <begin position="89"/>
        <end position="98"/>
    </location>
</feature>
<feature type="compositionally biased region" description="Polar residues" evidence="2">
    <location>
        <begin position="588"/>
        <end position="605"/>
    </location>
</feature>
<feature type="binding site" evidence="1">
    <location>
        <begin position="433"/>
        <end position="440"/>
    </location>
    <ligand>
        <name>ATP</name>
        <dbReference type="ChEBI" id="CHEBI:30616"/>
    </ligand>
</feature>
<feature type="modified residue" description="Phosphoserine; by host" evidence="1">
    <location>
        <position position="82"/>
    </location>
</feature>
<feature type="modified residue" description="Phosphoserine; by host" evidence="1">
    <location>
        <position position="90"/>
    </location>
</feature>
<feature type="cross-link" description="Glycyl lysine isopeptide (Lys-Gly) (interchain with G-Cter in SUMO)" evidence="1">
    <location>
        <position position="514"/>
    </location>
</feature>
<organismHost>
    <name type="scientific">Homo sapiens</name>
    <name type="common">Human</name>
    <dbReference type="NCBI Taxonomy" id="9606"/>
</organismHost>
<sequence length="605" mass="69302">MADPKGSTSKDGLDDWCIVEAECSDIENDLEELFDRDTDSDISELLDDNDDLDQGNSRELFHQQESKESEEHLQKLKRKYLSPQAIAQLSPRLESITLSPQQKSKRRLFAEQDSGLELTLTNEAEDVSSEVEVPALDSQPVAEAQIGTVDIHYTELLRASNNKAILMAKFKEAFGVGFNDLTRQFKSYKTCCNHWVLSVYAVHDDLLESSKKLLQQHCDYVWIRGIAAMSLFLLCFKVGKNRGTVHKLMTSMLNVHEKQILSEPPKLRNVAAALFWYKGAMGSGTFTYGPYPDWMAHQTIVGHQSTEANAFDMSVMVQWAFDNNYLDEADIAYQYAKLAPEDSNAVAWLAHNNQARFVRECASMVRFYKKGQMKEMSMSEWIHTRITEVEGEGHWSTIAKFLRYQQVNFIMFLAALKDMLHSVPKRNCILIYGPPNTGKSAFTMSLIRVLRGRVLSFVNSKSQFWLQPMSECKIALIDDVTDPCWLYMDTYLRNGLDGHYVSLDCKHKAPIQTKFPALLLTSNINVHNEITYRYLHSRIKGFEFPNPFPMKADNTPEFELTDQSWKSFFTRLWNQLELSDQEDEGDNGESQRPFQCSARSANEHL</sequence>
<organism>
    <name type="scientific">Human papillomavirus 14</name>
    <dbReference type="NCBI Taxonomy" id="10605"/>
    <lineage>
        <taxon>Viruses</taxon>
        <taxon>Monodnaviria</taxon>
        <taxon>Shotokuvirae</taxon>
        <taxon>Cossaviricota</taxon>
        <taxon>Papovaviricetes</taxon>
        <taxon>Zurhausenvirales</taxon>
        <taxon>Papillomaviridae</taxon>
        <taxon>Firstpapillomavirinae</taxon>
        <taxon>Betapapillomavirus</taxon>
        <taxon>Betapapillomavirus 1</taxon>
    </lineage>
</organism>
<keyword id="KW-0067">ATP-binding</keyword>
<keyword id="KW-0235">DNA replication</keyword>
<keyword id="KW-0238">DNA-binding</keyword>
<keyword id="KW-0244">Early protein</keyword>
<keyword id="KW-0347">Helicase</keyword>
<keyword id="KW-1048">Host nucleus</keyword>
<keyword id="KW-0378">Hydrolase</keyword>
<keyword id="KW-0413">Isomerase</keyword>
<keyword id="KW-1017">Isopeptide bond</keyword>
<keyword id="KW-0547">Nucleotide-binding</keyword>
<keyword id="KW-0597">Phosphoprotein</keyword>
<keyword id="KW-0832">Ubl conjugation</keyword>
<reference key="1">
    <citation type="journal article" date="1994" name="Curr. Top. Microbiol. Immunol.">
        <title>Primer-directed sequencing of human papillomavirus types.</title>
        <authorList>
            <person name="Delius H."/>
            <person name="Hofmann B."/>
        </authorList>
    </citation>
    <scope>NUCLEOTIDE SEQUENCE [GENOMIC DNA]</scope>
</reference>